<name>RL33_NITV2</name>
<evidence type="ECO:0000255" key="1">
    <source>
        <dbReference type="HAMAP-Rule" id="MF_00294"/>
    </source>
</evidence>
<evidence type="ECO:0000305" key="2"/>
<dbReference type="EMBL" id="AE017285">
    <property type="protein sequence ID" value="AAS97393.1"/>
    <property type="molecule type" value="Genomic_DNA"/>
</dbReference>
<dbReference type="RefSeq" id="WP_010940181.1">
    <property type="nucleotide sequence ID" value="NC_002937.3"/>
</dbReference>
<dbReference type="RefSeq" id="YP_012133.1">
    <property type="nucleotide sequence ID" value="NC_002937.3"/>
</dbReference>
<dbReference type="SMR" id="Q727D4"/>
<dbReference type="STRING" id="882.DVU_2921"/>
<dbReference type="PaxDb" id="882-DVU_2921"/>
<dbReference type="EnsemblBacteria" id="AAS97393">
    <property type="protein sequence ID" value="AAS97393"/>
    <property type="gene ID" value="DVU_2921"/>
</dbReference>
<dbReference type="KEGG" id="dvu:DVU_2921"/>
<dbReference type="PATRIC" id="fig|882.5.peg.2640"/>
<dbReference type="eggNOG" id="COG0267">
    <property type="taxonomic scope" value="Bacteria"/>
</dbReference>
<dbReference type="HOGENOM" id="CLU_190949_0_2_7"/>
<dbReference type="OrthoDB" id="21586at2"/>
<dbReference type="PhylomeDB" id="Q727D4"/>
<dbReference type="Proteomes" id="UP000002194">
    <property type="component" value="Chromosome"/>
</dbReference>
<dbReference type="GO" id="GO:0005737">
    <property type="term" value="C:cytoplasm"/>
    <property type="evidence" value="ECO:0007669"/>
    <property type="project" value="UniProtKB-ARBA"/>
</dbReference>
<dbReference type="GO" id="GO:1990904">
    <property type="term" value="C:ribonucleoprotein complex"/>
    <property type="evidence" value="ECO:0007669"/>
    <property type="project" value="UniProtKB-KW"/>
</dbReference>
<dbReference type="GO" id="GO:0005840">
    <property type="term" value="C:ribosome"/>
    <property type="evidence" value="ECO:0007669"/>
    <property type="project" value="UniProtKB-KW"/>
</dbReference>
<dbReference type="GO" id="GO:0003735">
    <property type="term" value="F:structural constituent of ribosome"/>
    <property type="evidence" value="ECO:0007669"/>
    <property type="project" value="InterPro"/>
</dbReference>
<dbReference type="GO" id="GO:0006412">
    <property type="term" value="P:translation"/>
    <property type="evidence" value="ECO:0007669"/>
    <property type="project" value="UniProtKB-UniRule"/>
</dbReference>
<dbReference type="Gene3D" id="2.20.28.120">
    <property type="entry name" value="Ribosomal protein L33"/>
    <property type="match status" value="1"/>
</dbReference>
<dbReference type="HAMAP" id="MF_00294">
    <property type="entry name" value="Ribosomal_bL33"/>
    <property type="match status" value="1"/>
</dbReference>
<dbReference type="InterPro" id="IPR001705">
    <property type="entry name" value="Ribosomal_bL33"/>
</dbReference>
<dbReference type="InterPro" id="IPR018264">
    <property type="entry name" value="Ribosomal_bL33_CS"/>
</dbReference>
<dbReference type="InterPro" id="IPR038584">
    <property type="entry name" value="Ribosomal_bL33_sf"/>
</dbReference>
<dbReference type="InterPro" id="IPR011332">
    <property type="entry name" value="Ribosomal_zn-bd"/>
</dbReference>
<dbReference type="NCBIfam" id="NF001764">
    <property type="entry name" value="PRK00504.1"/>
    <property type="match status" value="1"/>
</dbReference>
<dbReference type="NCBIfam" id="NF001860">
    <property type="entry name" value="PRK00595.1"/>
    <property type="match status" value="1"/>
</dbReference>
<dbReference type="NCBIfam" id="TIGR01023">
    <property type="entry name" value="rpmG_bact"/>
    <property type="match status" value="1"/>
</dbReference>
<dbReference type="PANTHER" id="PTHR43168">
    <property type="entry name" value="50S RIBOSOMAL PROTEIN L33, CHLOROPLASTIC"/>
    <property type="match status" value="1"/>
</dbReference>
<dbReference type="PANTHER" id="PTHR43168:SF2">
    <property type="entry name" value="LARGE RIBOSOMAL SUBUNIT PROTEIN BL33C"/>
    <property type="match status" value="1"/>
</dbReference>
<dbReference type="Pfam" id="PF00471">
    <property type="entry name" value="Ribosomal_L33"/>
    <property type="match status" value="1"/>
</dbReference>
<dbReference type="SUPFAM" id="SSF57829">
    <property type="entry name" value="Zn-binding ribosomal proteins"/>
    <property type="match status" value="1"/>
</dbReference>
<dbReference type="PROSITE" id="PS00582">
    <property type="entry name" value="RIBOSOMAL_L33"/>
    <property type="match status" value="1"/>
</dbReference>
<keyword id="KW-1185">Reference proteome</keyword>
<keyword id="KW-0687">Ribonucleoprotein</keyword>
<keyword id="KW-0689">Ribosomal protein</keyword>
<protein>
    <recommendedName>
        <fullName evidence="1">Large ribosomal subunit protein bL33</fullName>
    </recommendedName>
    <alternativeName>
        <fullName evidence="2">50S ribosomal protein L33</fullName>
    </alternativeName>
</protein>
<comment type="similarity">
    <text evidence="1">Belongs to the bacterial ribosomal protein bL33 family.</text>
</comment>
<proteinExistence type="inferred from homology"/>
<reference key="1">
    <citation type="journal article" date="2004" name="Nat. Biotechnol.">
        <title>The genome sequence of the anaerobic, sulfate-reducing bacterium Desulfovibrio vulgaris Hildenborough.</title>
        <authorList>
            <person name="Heidelberg J.F."/>
            <person name="Seshadri R."/>
            <person name="Haveman S.A."/>
            <person name="Hemme C.L."/>
            <person name="Paulsen I.T."/>
            <person name="Kolonay J.F."/>
            <person name="Eisen J.A."/>
            <person name="Ward N.L."/>
            <person name="Methe B.A."/>
            <person name="Brinkac L.M."/>
            <person name="Daugherty S.C."/>
            <person name="DeBoy R.T."/>
            <person name="Dodson R.J."/>
            <person name="Durkin A.S."/>
            <person name="Madupu R."/>
            <person name="Nelson W.C."/>
            <person name="Sullivan S.A."/>
            <person name="Fouts D.E."/>
            <person name="Haft D.H."/>
            <person name="Selengut J."/>
            <person name="Peterson J.D."/>
            <person name="Davidsen T.M."/>
            <person name="Zafar N."/>
            <person name="Zhou L."/>
            <person name="Radune D."/>
            <person name="Dimitrov G."/>
            <person name="Hance M."/>
            <person name="Tran K."/>
            <person name="Khouri H.M."/>
            <person name="Gill J."/>
            <person name="Utterback T.R."/>
            <person name="Feldblyum T.V."/>
            <person name="Wall J.D."/>
            <person name="Voordouw G."/>
            <person name="Fraser C.M."/>
        </authorList>
    </citation>
    <scope>NUCLEOTIDE SEQUENCE [LARGE SCALE GENOMIC DNA]</scope>
    <source>
        <strain>ATCC 29579 / DSM 644 / CCUG 34227 / NCIMB 8303 / VKM B-1760 / Hildenborough</strain>
    </source>
</reference>
<organism>
    <name type="scientific">Nitratidesulfovibrio vulgaris (strain ATCC 29579 / DSM 644 / CCUG 34227 / NCIMB 8303 / VKM B-1760 / Hildenborough)</name>
    <name type="common">Desulfovibrio vulgaris</name>
    <dbReference type="NCBI Taxonomy" id="882"/>
    <lineage>
        <taxon>Bacteria</taxon>
        <taxon>Pseudomonadati</taxon>
        <taxon>Thermodesulfobacteriota</taxon>
        <taxon>Desulfovibrionia</taxon>
        <taxon>Desulfovibrionales</taxon>
        <taxon>Desulfovibrionaceae</taxon>
        <taxon>Nitratidesulfovibrio</taxon>
    </lineage>
</organism>
<feature type="chain" id="PRO_0000356450" description="Large ribosomal subunit protein bL33">
    <location>
        <begin position="1"/>
        <end position="49"/>
    </location>
</feature>
<sequence length="49" mass="5936">MRVNIQLACTECKRRNYATDKNKKNTTGRLELKKYCPWDKKHTVHRETK</sequence>
<gene>
    <name evidence="1" type="primary">rpmG</name>
    <name type="ordered locus">DVU_2921</name>
</gene>
<accession>Q727D4</accession>